<comment type="function">
    <text evidence="1">Has a dual role in the assembly of mitochondrial ATPase. Acts as a protease that removes N-terminal residues of mitochondrial ATPase CF(0) subunit 6 at the intermembrane space side. Also involved in the correct assembly of the membrane-embedded ATPase CF(0) particle, probably mediating association of subunit 6 with the subunit 9 ring (By similarity).</text>
</comment>
<comment type="subcellular location">
    <subcellularLocation>
        <location>Mitochondrion inner membrane</location>
        <topology>Peripheral membrane protein</topology>
        <orientation>Intermembrane side</orientation>
    </subcellularLocation>
    <text evidence="1">Associates loosely with the inner membrane.</text>
</comment>
<comment type="similarity">
    <text evidence="3">Belongs to the peptidase M76 family.</text>
</comment>
<accession>Q6FIY7</accession>
<keyword id="KW-0378">Hydrolase</keyword>
<keyword id="KW-0472">Membrane</keyword>
<keyword id="KW-0479">Metal-binding</keyword>
<keyword id="KW-0482">Metalloprotease</keyword>
<keyword id="KW-0496">Mitochondrion</keyword>
<keyword id="KW-0999">Mitochondrion inner membrane</keyword>
<keyword id="KW-0645">Protease</keyword>
<keyword id="KW-1185">Reference proteome</keyword>
<proteinExistence type="inferred from homology"/>
<organism>
    <name type="scientific">Candida glabrata (strain ATCC 2001 / BCRC 20586 / JCM 3761 / NBRC 0622 / NRRL Y-65 / CBS 138)</name>
    <name type="common">Yeast</name>
    <name type="synonym">Nakaseomyces glabratus</name>
    <dbReference type="NCBI Taxonomy" id="284593"/>
    <lineage>
        <taxon>Eukaryota</taxon>
        <taxon>Fungi</taxon>
        <taxon>Dikarya</taxon>
        <taxon>Ascomycota</taxon>
        <taxon>Saccharomycotina</taxon>
        <taxon>Saccharomycetes</taxon>
        <taxon>Saccharomycetales</taxon>
        <taxon>Saccharomycetaceae</taxon>
        <taxon>Nakaseomyces</taxon>
    </lineage>
</organism>
<reference key="1">
    <citation type="journal article" date="2004" name="Nature">
        <title>Genome evolution in yeasts.</title>
        <authorList>
            <person name="Dujon B."/>
            <person name="Sherman D."/>
            <person name="Fischer G."/>
            <person name="Durrens P."/>
            <person name="Casaregola S."/>
            <person name="Lafontaine I."/>
            <person name="de Montigny J."/>
            <person name="Marck C."/>
            <person name="Neuveglise C."/>
            <person name="Talla E."/>
            <person name="Goffard N."/>
            <person name="Frangeul L."/>
            <person name="Aigle M."/>
            <person name="Anthouard V."/>
            <person name="Babour A."/>
            <person name="Barbe V."/>
            <person name="Barnay S."/>
            <person name="Blanchin S."/>
            <person name="Beckerich J.-M."/>
            <person name="Beyne E."/>
            <person name="Bleykasten C."/>
            <person name="Boisrame A."/>
            <person name="Boyer J."/>
            <person name="Cattolico L."/>
            <person name="Confanioleri F."/>
            <person name="de Daruvar A."/>
            <person name="Despons L."/>
            <person name="Fabre E."/>
            <person name="Fairhead C."/>
            <person name="Ferry-Dumazet H."/>
            <person name="Groppi A."/>
            <person name="Hantraye F."/>
            <person name="Hennequin C."/>
            <person name="Jauniaux N."/>
            <person name="Joyet P."/>
            <person name="Kachouri R."/>
            <person name="Kerrest A."/>
            <person name="Koszul R."/>
            <person name="Lemaire M."/>
            <person name="Lesur I."/>
            <person name="Ma L."/>
            <person name="Muller H."/>
            <person name="Nicaud J.-M."/>
            <person name="Nikolski M."/>
            <person name="Oztas S."/>
            <person name="Ozier-Kalogeropoulos O."/>
            <person name="Pellenz S."/>
            <person name="Potier S."/>
            <person name="Richard G.-F."/>
            <person name="Straub M.-L."/>
            <person name="Suleau A."/>
            <person name="Swennen D."/>
            <person name="Tekaia F."/>
            <person name="Wesolowski-Louvel M."/>
            <person name="Westhof E."/>
            <person name="Wirth B."/>
            <person name="Zeniou-Meyer M."/>
            <person name="Zivanovic Y."/>
            <person name="Bolotin-Fukuhara M."/>
            <person name="Thierry A."/>
            <person name="Bouchier C."/>
            <person name="Caudron B."/>
            <person name="Scarpelli C."/>
            <person name="Gaillardin C."/>
            <person name="Weissenbach J."/>
            <person name="Wincker P."/>
            <person name="Souciet J.-L."/>
        </authorList>
    </citation>
    <scope>NUCLEOTIDE SEQUENCE [LARGE SCALE GENOMIC DNA]</scope>
    <source>
        <strain>ATCC 2001 / BCRC 20586 / JCM 3761 / NBRC 0622 / NRRL Y-65 / CBS 138</strain>
    </source>
</reference>
<sequence>MAGESFEWWRRTMQYQTGLGLTADEKARYEKDYAVYNREKQCKSCYEYRDWMLKYSPTVRFMIQQISKLNGNASDGKVLNFDESKIICDECPDWKSGGFHPEIGILLCQNRLKDKWHLEDTLSHELVHYFDNLKWQIDWLNLKQHACSEIRASALSGECRFSREFARLGFSMNFGRGHQDCAKRRAIISVMGNPNCKDKEHATKVVEEVWDSCFYDTRPFEEIYR</sequence>
<gene>
    <name type="primary">ATP23</name>
    <name type="ordered locus">CAGL0M10593g</name>
</gene>
<evidence type="ECO:0000250" key="1"/>
<evidence type="ECO:0000255" key="2">
    <source>
        <dbReference type="PROSITE-ProRule" id="PRU10095"/>
    </source>
</evidence>
<evidence type="ECO:0000305" key="3"/>
<name>ATP23_CANGA</name>
<feature type="chain" id="PRO_0000330058" description="Mitochondrial inner membrane protease ATP23">
    <location>
        <begin position="1"/>
        <end position="225"/>
    </location>
</feature>
<feature type="active site" evidence="2">
    <location>
        <position position="125"/>
    </location>
</feature>
<feature type="binding site" evidence="1">
    <location>
        <position position="124"/>
    </location>
    <ligand>
        <name>a divalent metal cation</name>
        <dbReference type="ChEBI" id="CHEBI:60240"/>
        <note>catalytic</note>
    </ligand>
</feature>
<feature type="binding site" evidence="1">
    <location>
        <position position="128"/>
    </location>
    <ligand>
        <name>a divalent metal cation</name>
        <dbReference type="ChEBI" id="CHEBI:60240"/>
        <note>catalytic</note>
    </ligand>
</feature>
<protein>
    <recommendedName>
        <fullName>Mitochondrial inner membrane protease ATP23</fullName>
        <ecNumber>3.4.24.-</ecNumber>
    </recommendedName>
</protein>
<dbReference type="EC" id="3.4.24.-"/>
<dbReference type="EMBL" id="CR380959">
    <property type="protein sequence ID" value="CAG62785.1"/>
    <property type="molecule type" value="Genomic_DNA"/>
</dbReference>
<dbReference type="RefSeq" id="XP_449807.1">
    <property type="nucleotide sequence ID" value="XM_449807.1"/>
</dbReference>
<dbReference type="FunCoup" id="Q6FIY7">
    <property type="interactions" value="513"/>
</dbReference>
<dbReference type="STRING" id="284593.Q6FIY7"/>
<dbReference type="MEROPS" id="M76.002"/>
<dbReference type="EnsemblFungi" id="CAGL0M10593g-T">
    <property type="protein sequence ID" value="CAGL0M10593g-T-p1"/>
    <property type="gene ID" value="CAGL0M10593g"/>
</dbReference>
<dbReference type="KEGG" id="cgr:2891372"/>
<dbReference type="CGD" id="CAL0136521">
    <property type="gene designation" value="CAGL0M10593g"/>
</dbReference>
<dbReference type="VEuPathDB" id="FungiDB:B1J91_M10593g"/>
<dbReference type="VEuPathDB" id="FungiDB:CAGL0M10593g"/>
<dbReference type="eggNOG" id="KOG3314">
    <property type="taxonomic scope" value="Eukaryota"/>
</dbReference>
<dbReference type="HOGENOM" id="CLU_079125_0_0_1"/>
<dbReference type="InParanoid" id="Q6FIY7"/>
<dbReference type="OMA" id="EAHQNCV"/>
<dbReference type="Proteomes" id="UP000002428">
    <property type="component" value="Chromosome M"/>
</dbReference>
<dbReference type="GO" id="GO:0005743">
    <property type="term" value="C:mitochondrial inner membrane"/>
    <property type="evidence" value="ECO:0007669"/>
    <property type="project" value="UniProtKB-SubCell"/>
</dbReference>
<dbReference type="GO" id="GO:0046872">
    <property type="term" value="F:metal ion binding"/>
    <property type="evidence" value="ECO:0007669"/>
    <property type="project" value="UniProtKB-KW"/>
</dbReference>
<dbReference type="GO" id="GO:0004222">
    <property type="term" value="F:metalloendopeptidase activity"/>
    <property type="evidence" value="ECO:0007669"/>
    <property type="project" value="InterPro"/>
</dbReference>
<dbReference type="GO" id="GO:0034982">
    <property type="term" value="P:mitochondrial protein processing"/>
    <property type="evidence" value="ECO:0007669"/>
    <property type="project" value="TreeGrafter"/>
</dbReference>
<dbReference type="GO" id="GO:0033615">
    <property type="term" value="P:mitochondrial proton-transporting ATP synthase complex assembly"/>
    <property type="evidence" value="ECO:0007669"/>
    <property type="project" value="TreeGrafter"/>
</dbReference>
<dbReference type="InterPro" id="IPR019165">
    <property type="entry name" value="Peptidase_M76_ATP23"/>
</dbReference>
<dbReference type="PANTHER" id="PTHR21711">
    <property type="entry name" value="MITOCHONDRIAL INNER MEMBRANE PROTEASE"/>
    <property type="match status" value="1"/>
</dbReference>
<dbReference type="PANTHER" id="PTHR21711:SF0">
    <property type="entry name" value="MITOCHONDRIAL INNER MEMBRANE PROTEASE ATP23 HOMOLOG"/>
    <property type="match status" value="1"/>
</dbReference>
<dbReference type="Pfam" id="PF09768">
    <property type="entry name" value="Peptidase_M76"/>
    <property type="match status" value="1"/>
</dbReference>
<dbReference type="PROSITE" id="PS00142">
    <property type="entry name" value="ZINC_PROTEASE"/>
    <property type="match status" value="1"/>
</dbReference>